<sequence>MAEGEPQVQFKLVLVGDGGTGKTTFVKRHLTGEFEKKYVATLGVEVHPLVFHTNRGAIKYNVWDTAGQEKFGGLRDGYYIQAQCAIIMFDVTSRVTYKNVPNWHRDLVRVCENIPIVLCGNKVDIKDRKVKAKSIVFHRKKNLQYYDISAKSNYNFEKPFLWLARKLIGDPNLEFVAMPALAPPEILMDPSLAAQYEHDLKVASETALPDEDDDL</sequence>
<reference key="1">
    <citation type="journal article" date="2000" name="DNA Seq.">
        <title>The structure and expression of the Salmo salar Ran gene.</title>
        <authorList>
            <person name="Lundin M.H."/>
            <person name="Mikkelsen B."/>
            <person name="Gudim M."/>
            <person name="Syed M."/>
        </authorList>
    </citation>
    <scope>NUCLEOTIDE SEQUENCE [GENOMIC DNA / MRNA]</scope>
    <source>
        <tissue>Liver</tissue>
    </source>
</reference>
<dbReference type="EC" id="3.6.5.-" evidence="2"/>
<dbReference type="EMBL" id="AJ012478">
    <property type="protein sequence ID" value="CAA10040.1"/>
    <property type="molecule type" value="mRNA"/>
</dbReference>
<dbReference type="EMBL" id="AJ012477">
    <property type="protein sequence ID" value="CAA10039.1"/>
    <property type="molecule type" value="Genomic_DNA"/>
</dbReference>
<dbReference type="RefSeq" id="NP_001117103.1">
    <property type="nucleotide sequence ID" value="NM_001123631.1"/>
</dbReference>
<dbReference type="RefSeq" id="XP_014055038.1">
    <property type="nucleotide sequence ID" value="XM_014199563.2"/>
</dbReference>
<dbReference type="RefSeq" id="XP_014067596.1">
    <property type="nucleotide sequence ID" value="XM_014212121.1"/>
</dbReference>
<dbReference type="RefSeq" id="XP_014067597.1">
    <property type="nucleotide sequence ID" value="XM_014212122.1"/>
</dbReference>
<dbReference type="SMR" id="Q9YGC0"/>
<dbReference type="STRING" id="8030.ENSSSAP00000059417"/>
<dbReference type="PaxDb" id="8030-ENSSSAP00000059417"/>
<dbReference type="Ensembl" id="ENSSSAT00070047497">
    <property type="protein sequence ID" value="ENSSSAP00070045539"/>
    <property type="gene ID" value="ENSSSAG00070029600"/>
</dbReference>
<dbReference type="Ensembl" id="ENSSSAT00070050507">
    <property type="protein sequence ID" value="ENSSSAP00070048456"/>
    <property type="gene ID" value="ENSSSAG00070031478"/>
</dbReference>
<dbReference type="GeneID" id="100136389"/>
<dbReference type="GeneID" id="100136528"/>
<dbReference type="KEGG" id="sasa:100136389"/>
<dbReference type="KEGG" id="sasa:100136528"/>
<dbReference type="CTD" id="100136528"/>
<dbReference type="CTD" id="5901"/>
<dbReference type="OrthoDB" id="141355at7898"/>
<dbReference type="Proteomes" id="UP000087266">
    <property type="component" value="Chromosome ssa05"/>
</dbReference>
<dbReference type="Proteomes" id="UP000087266">
    <property type="component" value="Chromosome ssa09"/>
</dbReference>
<dbReference type="Bgee" id="ENSSSAG00000074478">
    <property type="expression patterns" value="Expressed in mesonephros and 24 other cell types or tissues"/>
</dbReference>
<dbReference type="GO" id="GO:0005829">
    <property type="term" value="C:cytosol"/>
    <property type="evidence" value="ECO:0007669"/>
    <property type="project" value="UniProtKB-SubCell"/>
</dbReference>
<dbReference type="GO" id="GO:0005635">
    <property type="term" value="C:nuclear envelope"/>
    <property type="evidence" value="ECO:0007669"/>
    <property type="project" value="UniProtKB-SubCell"/>
</dbReference>
<dbReference type="GO" id="GO:0005634">
    <property type="term" value="C:nucleus"/>
    <property type="evidence" value="ECO:0000250"/>
    <property type="project" value="UniProtKB"/>
</dbReference>
<dbReference type="GO" id="GO:0005525">
    <property type="term" value="F:GTP binding"/>
    <property type="evidence" value="ECO:0000250"/>
    <property type="project" value="UniProtKB"/>
</dbReference>
<dbReference type="GO" id="GO:0003924">
    <property type="term" value="F:GTPase activity"/>
    <property type="evidence" value="ECO:0000250"/>
    <property type="project" value="UniProtKB"/>
</dbReference>
<dbReference type="GO" id="GO:0000287">
    <property type="term" value="F:magnesium ion binding"/>
    <property type="evidence" value="ECO:0000250"/>
    <property type="project" value="UniProtKB"/>
</dbReference>
<dbReference type="GO" id="GO:0046039">
    <property type="term" value="P:GTP metabolic process"/>
    <property type="evidence" value="ECO:0000250"/>
    <property type="project" value="UniProtKB"/>
</dbReference>
<dbReference type="GO" id="GO:0000070">
    <property type="term" value="P:mitotic sister chromatid segregation"/>
    <property type="evidence" value="ECO:0000250"/>
    <property type="project" value="UniProtKB"/>
</dbReference>
<dbReference type="GO" id="GO:0006606">
    <property type="term" value="P:protein import into nucleus"/>
    <property type="evidence" value="ECO:0000250"/>
    <property type="project" value="UniProtKB"/>
</dbReference>
<dbReference type="GO" id="GO:0000054">
    <property type="term" value="P:ribosomal subunit export from nucleus"/>
    <property type="evidence" value="ECO:0007669"/>
    <property type="project" value="TreeGrafter"/>
</dbReference>
<dbReference type="GO" id="GO:0061015">
    <property type="term" value="P:snRNA import into nucleus"/>
    <property type="evidence" value="ECO:0000250"/>
    <property type="project" value="UniProtKB"/>
</dbReference>
<dbReference type="CDD" id="cd00877">
    <property type="entry name" value="Ran"/>
    <property type="match status" value="1"/>
</dbReference>
<dbReference type="FunFam" id="3.40.50.300:FF:000131">
    <property type="entry name" value="GTP-binding nuclear protein Ran"/>
    <property type="match status" value="1"/>
</dbReference>
<dbReference type="Gene3D" id="3.40.50.300">
    <property type="entry name" value="P-loop containing nucleotide triphosphate hydrolases"/>
    <property type="match status" value="1"/>
</dbReference>
<dbReference type="InterPro" id="IPR027417">
    <property type="entry name" value="P-loop_NTPase"/>
</dbReference>
<dbReference type="InterPro" id="IPR002041">
    <property type="entry name" value="Ran_GTPase"/>
</dbReference>
<dbReference type="InterPro" id="IPR005225">
    <property type="entry name" value="Small_GTP-bd"/>
</dbReference>
<dbReference type="InterPro" id="IPR001806">
    <property type="entry name" value="Small_GTPase"/>
</dbReference>
<dbReference type="NCBIfam" id="TIGR00231">
    <property type="entry name" value="small_GTP"/>
    <property type="match status" value="1"/>
</dbReference>
<dbReference type="PANTHER" id="PTHR24071:SF17">
    <property type="entry name" value="GTP-BINDING NUCLEAR PROTEIN RAN"/>
    <property type="match status" value="1"/>
</dbReference>
<dbReference type="PANTHER" id="PTHR24071">
    <property type="entry name" value="RAN GTPASE"/>
    <property type="match status" value="1"/>
</dbReference>
<dbReference type="Pfam" id="PF00071">
    <property type="entry name" value="Ras"/>
    <property type="match status" value="1"/>
</dbReference>
<dbReference type="PRINTS" id="PR00627">
    <property type="entry name" value="GTPRANTC4"/>
</dbReference>
<dbReference type="SMART" id="SM00175">
    <property type="entry name" value="RAB"/>
    <property type="match status" value="1"/>
</dbReference>
<dbReference type="SMART" id="SM00176">
    <property type="entry name" value="RAN"/>
    <property type="match status" value="1"/>
</dbReference>
<dbReference type="SMART" id="SM00173">
    <property type="entry name" value="RAS"/>
    <property type="match status" value="1"/>
</dbReference>
<dbReference type="SMART" id="SM00174">
    <property type="entry name" value="RHO"/>
    <property type="match status" value="1"/>
</dbReference>
<dbReference type="SUPFAM" id="SSF52540">
    <property type="entry name" value="P-loop containing nucleoside triphosphate hydrolases"/>
    <property type="match status" value="1"/>
</dbReference>
<dbReference type="PROSITE" id="PS51418">
    <property type="entry name" value="RAN"/>
    <property type="match status" value="1"/>
</dbReference>
<accession>Q9YGC0</accession>
<gene>
    <name type="primary">ran</name>
    <name type="synonym">ran1</name>
</gene>
<keyword id="KW-0963">Cytoplasm</keyword>
<keyword id="KW-0342">GTP-binding</keyword>
<keyword id="KW-0378">Hydrolase</keyword>
<keyword id="KW-0460">Magnesium</keyword>
<keyword id="KW-0479">Metal-binding</keyword>
<keyword id="KW-0547">Nucleotide-binding</keyword>
<keyword id="KW-0539">Nucleus</keyword>
<keyword id="KW-0653">Protein transport</keyword>
<keyword id="KW-1185">Reference proteome</keyword>
<keyword id="KW-0813">Transport</keyword>
<comment type="function">
    <text evidence="2">GTPase involved in nucleocytoplasmic transport, participating both to the import and the export from the nucleus of proteins and RNAs. Switches between a cytoplasmic GDP- and a nuclear GTP-bound state by nucleotide exchange and GTP hydrolysis. Nuclear import receptors such as importin beta bind their substrates only in the absence of GTP-bound RAN and release them upon direct interaction with GTP-bound RAN, while export receptors behave in the opposite way. Thereby, RAN controls cargo loading and release by transport receptors in the proper compartment and ensures the directionality of the transport. Interaction with RANBP1 induces a conformation change in the complex formed by XPO1 and RAN that triggers the release of the nuclear export signal of cargo proteins. RAN (GTP-bound form) triggers microtubule assembly at mitotic chromosomes and is required for normal mitotic spindle assembly and chromosome segregation. Required for normal progress through mitosis.</text>
</comment>
<comment type="catalytic activity">
    <reaction evidence="2">
        <text>GTP + H2O = GDP + phosphate + H(+)</text>
        <dbReference type="Rhea" id="RHEA:19669"/>
        <dbReference type="ChEBI" id="CHEBI:15377"/>
        <dbReference type="ChEBI" id="CHEBI:15378"/>
        <dbReference type="ChEBI" id="CHEBI:37565"/>
        <dbReference type="ChEBI" id="CHEBI:43474"/>
        <dbReference type="ChEBI" id="CHEBI:58189"/>
    </reaction>
    <physiologicalReaction direction="left-to-right" evidence="2">
        <dbReference type="Rhea" id="RHEA:19670"/>
    </physiologicalReaction>
</comment>
<comment type="cofactor">
    <cofactor evidence="2">
        <name>Mg(2+)</name>
        <dbReference type="ChEBI" id="CHEBI:18420"/>
    </cofactor>
    <text evidence="2">Mg(2+) interacts primarily with the phosphate groups of the bound guanine nucleotide.</text>
</comment>
<comment type="subunit">
    <text evidence="1 2 3">Monomer. Interacts with RANGAP1, which promotes RAN-mediated GTP hydrolysis. Interacts with KPNB1. Interaction with KPNB1 inhibits RANGAP1-mediated stimulation of GTPase activity. Interacts with RCC1 which promotes the exchange of RAN-bound GDP by GTP. Interaction with KPNB1 inhibits RCC1-mediated exchange of RAN-bound GDP by GTP. Interacts (GTP-bound form) with TNPO1; the interaction is direct. Interacts (GTP-bound form) with TNPO3; the interaction is direct. Interacts with KPNB1 and with TNPO1; both inhibit RAN GTPase activity. Interacts (via C-terminus) with RANBP1, which alleviates the inhibition of RAN GTPase activity. Interacts with RANGRF, which promotes the release of bound guanine nucleotide. RANGRF and RCC1 compete for an overlapping binding site on RAN. Identified in a complex with KPNA2 and CSE1L; interaction with RANBP1 mediates dissociation of RAN from this complex. Interaction with both RANBP1 and KPNA2 promotes dissociation of the complex between RAN and KPNB1. Identified in a complex composed of RAN, RANGAP1 and RANBP1. Identified in a complex that contains TNPO1, RAN and RANBP1. Identified in a nuclear export complex with XPO1. Interaction with RANBP1 or RANBP2 induces a conformation change in the complex formed by XPO1 and RAN that triggers the release of the nuclear export signal of cargo proteins. Component of a nuclear export receptor complex composed of KPNB1, RAN, SNUPN and XPO1.</text>
</comment>
<comment type="subcellular location">
    <subcellularLocation>
        <location evidence="2">Nucleus</location>
    </subcellularLocation>
    <subcellularLocation>
        <location evidence="2">Nucleus envelope</location>
    </subcellularLocation>
    <subcellularLocation>
        <location evidence="2">Cytoplasm</location>
        <location evidence="2">Cytosol</location>
    </subcellularLocation>
    <subcellularLocation>
        <location evidence="2">Cytoplasm</location>
    </subcellularLocation>
    <text evidence="2">Predominantly nuclear during interphase. Becomes dispersed throughout the cytoplasm during mitosis (By similarity).</text>
</comment>
<comment type="similarity">
    <text evidence="4 5">Belongs to the small GTPase superfamily. Ran family.</text>
</comment>
<evidence type="ECO:0000250" key="1">
    <source>
        <dbReference type="UniProtKB" id="P62825"/>
    </source>
</evidence>
<evidence type="ECO:0000250" key="2">
    <source>
        <dbReference type="UniProtKB" id="P62826"/>
    </source>
</evidence>
<evidence type="ECO:0000250" key="3">
    <source>
        <dbReference type="UniProtKB" id="P62827"/>
    </source>
</evidence>
<evidence type="ECO:0000255" key="4">
    <source>
        <dbReference type="PROSITE-ProRule" id="PRU00752"/>
    </source>
</evidence>
<evidence type="ECO:0000305" key="5"/>
<proteinExistence type="evidence at transcript level"/>
<feature type="chain" id="PRO_0000208706" description="GTP-binding nuclear protein Ran">
    <location>
        <begin position="1"/>
        <end position="215"/>
    </location>
</feature>
<feature type="domain" description="Small GTPase Ran-type" evidence="4">
    <location>
        <begin position="6"/>
        <end position="170"/>
    </location>
</feature>
<feature type="region of interest" description="Switch-I" evidence="4">
    <location>
        <begin position="36"/>
        <end position="44"/>
    </location>
</feature>
<feature type="region of interest" description="Switch-II" evidence="4">
    <location>
        <begin position="67"/>
        <end position="83"/>
    </location>
</feature>
<feature type="region of interest" description="Interaction with RANBP1" evidence="2">
    <location>
        <begin position="210"/>
        <end position="215"/>
    </location>
</feature>
<feature type="binding site" evidence="1">
    <location>
        <begin position="17"/>
        <end position="24"/>
    </location>
    <ligand>
        <name>GTP</name>
        <dbReference type="ChEBI" id="CHEBI:37565"/>
    </ligand>
</feature>
<feature type="binding site" evidence="1">
    <location>
        <begin position="35"/>
        <end position="41"/>
    </location>
    <ligand>
        <name>GTP</name>
        <dbReference type="ChEBI" id="CHEBI:37565"/>
    </ligand>
</feature>
<feature type="binding site" evidence="1">
    <location>
        <position position="67"/>
    </location>
    <ligand>
        <name>GTP</name>
        <dbReference type="ChEBI" id="CHEBI:37565"/>
    </ligand>
</feature>
<feature type="binding site" evidence="1">
    <location>
        <begin position="121"/>
        <end position="124"/>
    </location>
    <ligand>
        <name>GTP</name>
        <dbReference type="ChEBI" id="CHEBI:37565"/>
    </ligand>
</feature>
<feature type="binding site" evidence="1">
    <location>
        <begin position="149"/>
        <end position="151"/>
    </location>
    <ligand>
        <name>GTP</name>
        <dbReference type="ChEBI" id="CHEBI:37565"/>
    </ligand>
</feature>
<feature type="site" description="Essential for GTP hydrolysis" evidence="2">
    <location>
        <position position="68"/>
    </location>
</feature>
<name>RAN_SALSA</name>
<organism>
    <name type="scientific">Salmo salar</name>
    <name type="common">Atlantic salmon</name>
    <dbReference type="NCBI Taxonomy" id="8030"/>
    <lineage>
        <taxon>Eukaryota</taxon>
        <taxon>Metazoa</taxon>
        <taxon>Chordata</taxon>
        <taxon>Craniata</taxon>
        <taxon>Vertebrata</taxon>
        <taxon>Euteleostomi</taxon>
        <taxon>Actinopterygii</taxon>
        <taxon>Neopterygii</taxon>
        <taxon>Teleostei</taxon>
        <taxon>Protacanthopterygii</taxon>
        <taxon>Salmoniformes</taxon>
        <taxon>Salmonidae</taxon>
        <taxon>Salmoninae</taxon>
        <taxon>Salmo</taxon>
    </lineage>
</organism>
<protein>
    <recommendedName>
        <fullName>GTP-binding nuclear protein Ran</fullName>
        <ecNumber evidence="2">3.6.5.-</ecNumber>
    </recommendedName>
    <alternativeName>
        <fullName>GTPase Ran</fullName>
    </alternativeName>
    <alternativeName>
        <fullName>Ras-related nuclear protein</fullName>
    </alternativeName>
</protein>